<proteinExistence type="inferred from homology"/>
<gene>
    <name type="ordered locus">BU608</name>
</gene>
<dbReference type="EMBL" id="BA000003">
    <property type="protein sequence ID" value="BAB13292.1"/>
    <property type="molecule type" value="Genomic_DNA"/>
</dbReference>
<dbReference type="RefSeq" id="NP_240406.1">
    <property type="nucleotide sequence ID" value="NC_002528.1"/>
</dbReference>
<dbReference type="RefSeq" id="WP_009874555.1">
    <property type="nucleotide sequence ID" value="NZ_AP036055.1"/>
</dbReference>
<dbReference type="SMR" id="P57663"/>
<dbReference type="STRING" id="563178.BUAP5A_600"/>
<dbReference type="EnsemblBacteria" id="BAB13292">
    <property type="protein sequence ID" value="BAB13292"/>
    <property type="gene ID" value="BAB13292"/>
</dbReference>
<dbReference type="KEGG" id="buc:BU608"/>
<dbReference type="PATRIC" id="fig|107806.10.peg.610"/>
<dbReference type="eggNOG" id="COG2976">
    <property type="taxonomic scope" value="Bacteria"/>
</dbReference>
<dbReference type="HOGENOM" id="CLU_084785_0_1_6"/>
<dbReference type="BioCyc" id="BAPH107806:GBZJ-600-MONOMER"/>
<dbReference type="Proteomes" id="UP000001806">
    <property type="component" value="Chromosome"/>
</dbReference>
<dbReference type="GO" id="GO:0005886">
    <property type="term" value="C:plasma membrane"/>
    <property type="evidence" value="ECO:0007669"/>
    <property type="project" value="UniProtKB-SubCell"/>
</dbReference>
<dbReference type="GO" id="GO:0044877">
    <property type="term" value="F:protein-containing complex binding"/>
    <property type="evidence" value="ECO:0007669"/>
    <property type="project" value="InterPro"/>
</dbReference>
<dbReference type="InterPro" id="IPR018704">
    <property type="entry name" value="SecYEG/CpoB_TPR"/>
</dbReference>
<dbReference type="InterPro" id="IPR011990">
    <property type="entry name" value="TPR-like_helical_dom_sf"/>
</dbReference>
<dbReference type="InterPro" id="IPR026039">
    <property type="entry name" value="YfgM"/>
</dbReference>
<dbReference type="PANTHER" id="PTHR38035:SF1">
    <property type="entry name" value="ANCILLARY SECYEG TRANSLOCON SUBUNIT"/>
    <property type="match status" value="1"/>
</dbReference>
<dbReference type="PANTHER" id="PTHR38035">
    <property type="entry name" value="UPF0070 PROTEIN YFGM"/>
    <property type="match status" value="1"/>
</dbReference>
<dbReference type="Pfam" id="PF09976">
    <property type="entry name" value="TPR_21"/>
    <property type="match status" value="1"/>
</dbReference>
<dbReference type="SUPFAM" id="SSF48452">
    <property type="entry name" value="TPR-like"/>
    <property type="match status" value="1"/>
</dbReference>
<feature type="chain" id="PRO_0000214361" description="Ancillary SecYEG translocon subunit">
    <location>
        <begin position="1"/>
        <end position="193"/>
    </location>
</feature>
<feature type="topological domain" description="Cytoplasmic" evidence="1">
    <location>
        <begin position="1"/>
        <end position="8"/>
    </location>
</feature>
<feature type="transmembrane region" description="Helical" evidence="2">
    <location>
        <begin position="9"/>
        <end position="29"/>
    </location>
</feature>
<feature type="topological domain" description="Periplasmic" evidence="1">
    <location>
        <begin position="30"/>
        <end position="193"/>
    </location>
</feature>
<organism>
    <name type="scientific">Buchnera aphidicola subsp. Acyrthosiphon pisum (strain APS)</name>
    <name type="common">Acyrthosiphon pisum symbiotic bacterium</name>
    <dbReference type="NCBI Taxonomy" id="107806"/>
    <lineage>
        <taxon>Bacteria</taxon>
        <taxon>Pseudomonadati</taxon>
        <taxon>Pseudomonadota</taxon>
        <taxon>Gammaproteobacteria</taxon>
        <taxon>Enterobacterales</taxon>
        <taxon>Erwiniaceae</taxon>
        <taxon>Buchnera</taxon>
    </lineage>
</organism>
<keyword id="KW-0997">Cell inner membrane</keyword>
<keyword id="KW-1003">Cell membrane</keyword>
<keyword id="KW-0143">Chaperone</keyword>
<keyword id="KW-0472">Membrane</keyword>
<keyword id="KW-1185">Reference proteome</keyword>
<keyword id="KW-0812">Transmembrane</keyword>
<keyword id="KW-1133">Transmembrane helix</keyword>
<name>YFGM_BUCAI</name>
<reference key="1">
    <citation type="journal article" date="2000" name="Nature">
        <title>Genome sequence of the endocellular bacterial symbiont of aphids Buchnera sp. APS.</title>
        <authorList>
            <person name="Shigenobu S."/>
            <person name="Watanabe H."/>
            <person name="Hattori M."/>
            <person name="Sakaki Y."/>
            <person name="Ishikawa H."/>
        </authorList>
    </citation>
    <scope>NUCLEOTIDE SEQUENCE [LARGE SCALE GENOMIC DNA]</scope>
    <source>
        <strain>APS</strain>
    </source>
</reference>
<accession>P57663</accession>
<comment type="function">
    <text evidence="1">May mediate protein transfer from the SecYEG translocon to the periplasmic chaperone network via its periplasmic C-terminal region.</text>
</comment>
<comment type="subunit">
    <text evidence="1">Interacts with the SecYEG translocon (By similarity). Forms a complex with PpiD (By similarity).</text>
</comment>
<comment type="subcellular location">
    <subcellularLocation>
        <location evidence="1">Cell inner membrane</location>
        <topology evidence="1">Single-pass type II membrane protein</topology>
        <orientation evidence="1">Periplasmic side</orientation>
    </subcellularLocation>
</comment>
<comment type="similarity">
    <text evidence="3">Belongs to the YfgM family.</text>
</comment>
<evidence type="ECO:0000250" key="1">
    <source>
        <dbReference type="UniProtKB" id="P76576"/>
    </source>
</evidence>
<evidence type="ECO:0000255" key="2"/>
<evidence type="ECO:0000305" key="3"/>
<sequence length="193" mass="22817">MLNISKKNIIFFILFFLIISLILFNWKYFSLVNKENLESLKYEKIIKKINKKKSKNLYEVENFIVQNTSIYGTLTALSLAKKYVECNNLDKALLQLNNSLKYTKEENLKNLLKINIAKIQIQKNENNKAMNILETIQNHNWKNIIEHMKGDIFININNKKEAIKSWKKSLFIEDSNASKEIINMKLNELKEQN</sequence>
<protein>
    <recommendedName>
        <fullName evidence="1">Ancillary SecYEG translocon subunit</fullName>
    </recommendedName>
    <alternativeName>
        <fullName evidence="1">Periplasmic chaperone YfgM</fullName>
    </alternativeName>
</protein>